<proteinExistence type="evidence at transcript level"/>
<gene>
    <name type="ORF">UL24</name>
</gene>
<name>UL24_HHV2H</name>
<feature type="chain" id="PRO_0000385155" description="Protein UL24">
    <location>
        <begin position="1"/>
        <end position="281"/>
    </location>
</feature>
<feature type="region of interest" description="Disordered" evidence="2">
    <location>
        <begin position="199"/>
        <end position="252"/>
    </location>
</feature>
<feature type="compositionally biased region" description="Pro residues" evidence="2">
    <location>
        <begin position="236"/>
        <end position="246"/>
    </location>
</feature>
<protein>
    <recommendedName>
        <fullName>Protein UL24</fullName>
    </recommendedName>
</protein>
<accession>P89447</accession>
<organism>
    <name type="scientific">Human herpesvirus 2 (strain HG52)</name>
    <name type="common">HHV-2</name>
    <name type="synonym">Human herpes simplex virus 2</name>
    <dbReference type="NCBI Taxonomy" id="10315"/>
    <lineage>
        <taxon>Viruses</taxon>
        <taxon>Duplodnaviria</taxon>
        <taxon>Heunggongvirae</taxon>
        <taxon>Peploviricota</taxon>
        <taxon>Herviviricetes</taxon>
        <taxon>Herpesvirales</taxon>
        <taxon>Orthoherpesviridae</taxon>
        <taxon>Alphaherpesvirinae</taxon>
        <taxon>Simplexvirus</taxon>
        <taxon>Simplexvirus humanalpha2</taxon>
        <taxon>Human herpesvirus 2</taxon>
    </lineage>
</organism>
<reference key="1">
    <citation type="journal article" date="1998" name="J. Virol.">
        <title>The genome sequence of herpes simplex virus type 2.</title>
        <authorList>
            <person name="Dolan A."/>
            <person name="Jamieson F.E."/>
            <person name="Cunningham C."/>
            <person name="Barnett B.C."/>
            <person name="McGeoch D.J."/>
        </authorList>
    </citation>
    <scope>NUCLEOTIDE SEQUENCE [LARGE SCALE GENOMIC DNA]</scope>
</reference>
<reference key="2">
    <citation type="journal article" date="2001" name="Virus Genes">
        <title>Identification and characterization of the UL24 gene product of herpes simplex virus type 2.</title>
        <authorList>
            <person name="Hong-Yan Z."/>
            <person name="Murata T."/>
            <person name="Goshima F."/>
            <person name="Takakuwa H."/>
            <person name="Koshizuka T."/>
            <person name="Yamauchi Y."/>
            <person name="Nishiyama Y."/>
        </authorList>
    </citation>
    <scope>SUBCELLULAR LOCATION</scope>
    <scope>LATE PROTEIN</scope>
    <source>
        <strain>186</strain>
    </source>
</reference>
<organismHost>
    <name type="scientific">Homo sapiens</name>
    <name type="common">Human</name>
    <dbReference type="NCBI Taxonomy" id="9606"/>
</organismHost>
<keyword id="KW-1035">Host cytoplasm</keyword>
<keyword id="KW-1040">Host Golgi apparatus</keyword>
<keyword id="KW-1048">Host nucleus</keyword>
<keyword id="KW-0426">Late protein</keyword>
<keyword id="KW-1185">Reference proteome</keyword>
<keyword id="KW-0946">Virion</keyword>
<comment type="function">
    <text evidence="1">May participate in nuclear egress of viral particles. Plays a role in the dispersal of several host nucleolar proteins including NCL/nucleolin and NPM1. Since deletion of host NCL/nucleolin negatively impact on nuclear egress, UL24 supposedly acts on this process through its effect on host nucleoli (By similarity).</text>
</comment>
<comment type="subcellular location">
    <subcellularLocation>
        <location evidence="3">Virion</location>
    </subcellularLocation>
    <subcellularLocation>
        <location evidence="3">Host cytoplasm</location>
    </subcellularLocation>
    <subcellularLocation>
        <location evidence="3">Host nucleus</location>
        <location evidence="3">Host nucleolus</location>
    </subcellularLocation>
    <subcellularLocation>
        <location evidence="3">Host Golgi apparatus</location>
    </subcellularLocation>
</comment>
<comment type="induction">
    <text>Expressed late in the infection cycle.</text>
</comment>
<comment type="similarity">
    <text evidence="4">Belongs to the herpesviridae UL24 family.</text>
</comment>
<evidence type="ECO:0000250" key="1"/>
<evidence type="ECO:0000256" key="2">
    <source>
        <dbReference type="SAM" id="MobiDB-lite"/>
    </source>
</evidence>
<evidence type="ECO:0000269" key="3">
    <source>
    </source>
</evidence>
<evidence type="ECO:0000305" key="4"/>
<sequence length="281" mass="30547">MARTGRRAAVGRPARTSSLTERRRVLLAGVRSHTRFYKAFAREVREFNATRICGTLLTLMSGSLQGRSLFEATRVTLICEVDLGPRRPDCICVFEFANDKTLGGVCVILELKTCKSISSGDTASKREQRTTGMKQLRHSLKLLQSLAPPGDKVVYLCPILVFVAQRTLRVSRVTRLVPQKISGNITAAVRMLQSLSTYAVPPEPQTRRSRRRVAATARPQRPPSPTRDPEGTAGHPAPPESDPPSPGVVGVAAEGGGVLQKIAALFCVPVAAKSRPRTKTE</sequence>
<dbReference type="EMBL" id="Z86099">
    <property type="protein sequence ID" value="CAB06748.1"/>
    <property type="molecule type" value="Genomic_DNA"/>
</dbReference>
<dbReference type="RefSeq" id="YP_009137175.1">
    <property type="nucleotide sequence ID" value="NC_001798.2"/>
</dbReference>
<dbReference type="DNASU" id="1487308"/>
<dbReference type="GeneID" id="1487308"/>
<dbReference type="KEGG" id="vg:1487308"/>
<dbReference type="Proteomes" id="UP000001874">
    <property type="component" value="Segment"/>
</dbReference>
<dbReference type="GO" id="GO:0044177">
    <property type="term" value="C:host cell Golgi apparatus"/>
    <property type="evidence" value="ECO:0007669"/>
    <property type="project" value="UniProtKB-SubCell"/>
</dbReference>
<dbReference type="GO" id="GO:0044196">
    <property type="term" value="C:host cell nucleolus"/>
    <property type="evidence" value="ECO:0007669"/>
    <property type="project" value="UniProtKB-SubCell"/>
</dbReference>
<dbReference type="GO" id="GO:0044423">
    <property type="term" value="C:virion component"/>
    <property type="evidence" value="ECO:0007669"/>
    <property type="project" value="UniProtKB-KW"/>
</dbReference>
<dbReference type="InterPro" id="IPR002580">
    <property type="entry name" value="Herpes_UL24"/>
</dbReference>
<dbReference type="Pfam" id="PF01646">
    <property type="entry name" value="Herpes_UL24"/>
    <property type="match status" value="1"/>
</dbReference>